<reference key="1">
    <citation type="submission" date="2006-12" db="EMBL/GenBank/DDBJ databases">
        <title>Complete sequence of Halorhodospira halophila SL1.</title>
        <authorList>
            <consortium name="US DOE Joint Genome Institute"/>
            <person name="Copeland A."/>
            <person name="Lucas S."/>
            <person name="Lapidus A."/>
            <person name="Barry K."/>
            <person name="Detter J.C."/>
            <person name="Glavina del Rio T."/>
            <person name="Hammon N."/>
            <person name="Israni S."/>
            <person name="Dalin E."/>
            <person name="Tice H."/>
            <person name="Pitluck S."/>
            <person name="Saunders E."/>
            <person name="Brettin T."/>
            <person name="Bruce D."/>
            <person name="Han C."/>
            <person name="Tapia R."/>
            <person name="Schmutz J."/>
            <person name="Larimer F."/>
            <person name="Land M."/>
            <person name="Hauser L."/>
            <person name="Kyrpides N."/>
            <person name="Mikhailova N."/>
            <person name="Hoff W."/>
            <person name="Richardson P."/>
        </authorList>
    </citation>
    <scope>NUCLEOTIDE SEQUENCE [LARGE SCALE GENOMIC DNA]</scope>
    <source>
        <strain>DSM 244 / SL1</strain>
    </source>
</reference>
<comment type="function">
    <text evidence="1">Tetrapolymerization of the monopyrrole PBG into the hydroxymethylbilane pre-uroporphyrinogen in several discrete steps.</text>
</comment>
<comment type="catalytic activity">
    <reaction evidence="1">
        <text>4 porphobilinogen + H2O = hydroxymethylbilane + 4 NH4(+)</text>
        <dbReference type="Rhea" id="RHEA:13185"/>
        <dbReference type="ChEBI" id="CHEBI:15377"/>
        <dbReference type="ChEBI" id="CHEBI:28938"/>
        <dbReference type="ChEBI" id="CHEBI:57845"/>
        <dbReference type="ChEBI" id="CHEBI:58126"/>
        <dbReference type="EC" id="2.5.1.61"/>
    </reaction>
</comment>
<comment type="cofactor">
    <cofactor evidence="1">
        <name>dipyrromethane</name>
        <dbReference type="ChEBI" id="CHEBI:60342"/>
    </cofactor>
    <text evidence="1">Binds 1 dipyrromethane group covalently.</text>
</comment>
<comment type="pathway">
    <text evidence="1">Porphyrin-containing compound metabolism; protoporphyrin-IX biosynthesis; coproporphyrinogen-III from 5-aminolevulinate: step 2/4.</text>
</comment>
<comment type="subunit">
    <text evidence="1">Monomer.</text>
</comment>
<comment type="miscellaneous">
    <text evidence="1">The porphobilinogen subunits are added to the dipyrromethane group.</text>
</comment>
<comment type="similarity">
    <text evidence="1">Belongs to the HMBS family.</text>
</comment>
<protein>
    <recommendedName>
        <fullName evidence="1">Porphobilinogen deaminase</fullName>
        <shortName evidence="1">PBG</shortName>
        <ecNumber evidence="1">2.5.1.61</ecNumber>
    </recommendedName>
    <alternativeName>
        <fullName evidence="1">Hydroxymethylbilane synthase</fullName>
        <shortName evidence="1">HMBS</shortName>
    </alternativeName>
    <alternativeName>
        <fullName evidence="1">Pre-uroporphyrinogen synthase</fullName>
    </alternativeName>
</protein>
<dbReference type="EC" id="2.5.1.61" evidence="1"/>
<dbReference type="EMBL" id="CP000544">
    <property type="protein sequence ID" value="ABM61801.1"/>
    <property type="molecule type" value="Genomic_DNA"/>
</dbReference>
<dbReference type="RefSeq" id="WP_011813824.1">
    <property type="nucleotide sequence ID" value="NC_008789.1"/>
</dbReference>
<dbReference type="SMR" id="A1WVT9"/>
<dbReference type="STRING" id="349124.Hhal_1025"/>
<dbReference type="KEGG" id="hha:Hhal_1025"/>
<dbReference type="eggNOG" id="COG0181">
    <property type="taxonomic scope" value="Bacteria"/>
</dbReference>
<dbReference type="HOGENOM" id="CLU_019704_0_2_6"/>
<dbReference type="OrthoDB" id="9810298at2"/>
<dbReference type="UniPathway" id="UPA00251">
    <property type="reaction ID" value="UER00319"/>
</dbReference>
<dbReference type="Proteomes" id="UP000000647">
    <property type="component" value="Chromosome"/>
</dbReference>
<dbReference type="GO" id="GO:0005737">
    <property type="term" value="C:cytoplasm"/>
    <property type="evidence" value="ECO:0007669"/>
    <property type="project" value="TreeGrafter"/>
</dbReference>
<dbReference type="GO" id="GO:0004418">
    <property type="term" value="F:hydroxymethylbilane synthase activity"/>
    <property type="evidence" value="ECO:0007669"/>
    <property type="project" value="UniProtKB-UniRule"/>
</dbReference>
<dbReference type="GO" id="GO:0006782">
    <property type="term" value="P:protoporphyrinogen IX biosynthetic process"/>
    <property type="evidence" value="ECO:0007669"/>
    <property type="project" value="UniProtKB-UniRule"/>
</dbReference>
<dbReference type="CDD" id="cd13646">
    <property type="entry name" value="PBP2_EcHMBS_like"/>
    <property type="match status" value="1"/>
</dbReference>
<dbReference type="FunFam" id="3.30.160.40:FF:000002">
    <property type="entry name" value="Porphobilinogen deaminase"/>
    <property type="match status" value="1"/>
</dbReference>
<dbReference type="FunFam" id="3.40.190.10:FF:000004">
    <property type="entry name" value="Porphobilinogen deaminase"/>
    <property type="match status" value="1"/>
</dbReference>
<dbReference type="FunFam" id="3.40.190.10:FF:000005">
    <property type="entry name" value="Porphobilinogen deaminase"/>
    <property type="match status" value="1"/>
</dbReference>
<dbReference type="Gene3D" id="3.40.190.10">
    <property type="entry name" value="Periplasmic binding protein-like II"/>
    <property type="match status" value="2"/>
</dbReference>
<dbReference type="Gene3D" id="3.30.160.40">
    <property type="entry name" value="Porphobilinogen deaminase, C-terminal domain"/>
    <property type="match status" value="1"/>
</dbReference>
<dbReference type="HAMAP" id="MF_00260">
    <property type="entry name" value="Porphobil_deam"/>
    <property type="match status" value="1"/>
</dbReference>
<dbReference type="InterPro" id="IPR000860">
    <property type="entry name" value="HemC"/>
</dbReference>
<dbReference type="InterPro" id="IPR022419">
    <property type="entry name" value="Porphobilin_deaminase_cofac_BS"/>
</dbReference>
<dbReference type="InterPro" id="IPR022417">
    <property type="entry name" value="Porphobilin_deaminase_N"/>
</dbReference>
<dbReference type="InterPro" id="IPR022418">
    <property type="entry name" value="Porphobilinogen_deaminase_C"/>
</dbReference>
<dbReference type="InterPro" id="IPR036803">
    <property type="entry name" value="Porphobilinogen_deaminase_C_sf"/>
</dbReference>
<dbReference type="NCBIfam" id="TIGR00212">
    <property type="entry name" value="hemC"/>
    <property type="match status" value="1"/>
</dbReference>
<dbReference type="PANTHER" id="PTHR11557">
    <property type="entry name" value="PORPHOBILINOGEN DEAMINASE"/>
    <property type="match status" value="1"/>
</dbReference>
<dbReference type="PANTHER" id="PTHR11557:SF0">
    <property type="entry name" value="PORPHOBILINOGEN DEAMINASE"/>
    <property type="match status" value="1"/>
</dbReference>
<dbReference type="Pfam" id="PF01379">
    <property type="entry name" value="Porphobil_deam"/>
    <property type="match status" value="1"/>
</dbReference>
<dbReference type="Pfam" id="PF03900">
    <property type="entry name" value="Porphobil_deamC"/>
    <property type="match status" value="1"/>
</dbReference>
<dbReference type="PIRSF" id="PIRSF001438">
    <property type="entry name" value="4pyrrol_synth_OHMeBilane_synth"/>
    <property type="match status" value="1"/>
</dbReference>
<dbReference type="PRINTS" id="PR00151">
    <property type="entry name" value="PORPHBDMNASE"/>
</dbReference>
<dbReference type="SUPFAM" id="SSF53850">
    <property type="entry name" value="Periplasmic binding protein-like II"/>
    <property type="match status" value="1"/>
</dbReference>
<dbReference type="SUPFAM" id="SSF54782">
    <property type="entry name" value="Porphobilinogen deaminase (hydroxymethylbilane synthase), C-terminal domain"/>
    <property type="match status" value="1"/>
</dbReference>
<dbReference type="PROSITE" id="PS00533">
    <property type="entry name" value="PORPHOBILINOGEN_DEAM"/>
    <property type="match status" value="1"/>
</dbReference>
<feature type="chain" id="PRO_1000114156" description="Porphobilinogen deaminase">
    <location>
        <begin position="1"/>
        <end position="310"/>
    </location>
</feature>
<feature type="modified residue" description="S-(dipyrrolylmethanemethyl)cysteine" evidence="1">
    <location>
        <position position="242"/>
    </location>
</feature>
<evidence type="ECO:0000255" key="1">
    <source>
        <dbReference type="HAMAP-Rule" id="MF_00260"/>
    </source>
</evidence>
<name>HEM3_HALHL</name>
<keyword id="KW-0627">Porphyrin biosynthesis</keyword>
<keyword id="KW-1185">Reference proteome</keyword>
<keyword id="KW-0808">Transferase</keyword>
<organism>
    <name type="scientific">Halorhodospira halophila (strain DSM 244 / SL1)</name>
    <name type="common">Ectothiorhodospira halophila (strain DSM 244 / SL1)</name>
    <dbReference type="NCBI Taxonomy" id="349124"/>
    <lineage>
        <taxon>Bacteria</taxon>
        <taxon>Pseudomonadati</taxon>
        <taxon>Pseudomonadota</taxon>
        <taxon>Gammaproteobacteria</taxon>
        <taxon>Chromatiales</taxon>
        <taxon>Ectothiorhodospiraceae</taxon>
        <taxon>Halorhodospira</taxon>
    </lineage>
</organism>
<sequence length="310" mass="33984">MAAESLRIATRRSQLAMWQAEHIAAELQRLHPGLEVELVPMSTRGDEILDQPLARIGGKGLFMKELEDGMLRGEADLAVHSMKDIPWRLPEGFDLAAVSDRADPRDAFVSNHYSDLDELPHGARVGTASLRRQCQIMDRRPDLQIEVLRGNVQTRLRKLDDGVYDAIILAASGLDRLELTHRIAGRLTPEQSLPAVGQGALGIECREGDERVMKLVEGLNHEATRIRINAERGMNARLEGSCQVPIGGYAELDGDEVHLRGLVGAIDGSEVIRGEIRGPAAEAENLGRQLGDDLLARGADRILKAVAEQQ</sequence>
<proteinExistence type="inferred from homology"/>
<gene>
    <name evidence="1" type="primary">hemC</name>
    <name type="ordered locus">Hhal_1025</name>
</gene>
<accession>A1WVT9</accession>